<sequence>MAAPWVSLRLVAPMWNGTRGIHRLGGAVVPEGNQKKERKMLQFLNNHFYDVEALRGYLLQREMSKVHLKNRSFTWLEEQHGPYSAGAFFILKQGGAVKFRDKEWIRPDKYGHFSPEFWNFREVPVEAVDASDCEINYEGLDNLLLLKELQSLSLQRCPHVDDWCLSRLYPLADSLQELSLAGCPRVSERGLACLHHLQNLRRLDISDLPAVSNPGLTQILVEEMLPNCQVVGVDWAEGLKLGPEERPQDTASPVPA</sequence>
<organism>
    <name type="scientific">Macaca fascicularis</name>
    <name type="common">Crab-eating macaque</name>
    <name type="synonym">Cynomolgus monkey</name>
    <dbReference type="NCBI Taxonomy" id="9541"/>
    <lineage>
        <taxon>Eukaryota</taxon>
        <taxon>Metazoa</taxon>
        <taxon>Chordata</taxon>
        <taxon>Craniata</taxon>
        <taxon>Vertebrata</taxon>
        <taxon>Euteleostomi</taxon>
        <taxon>Mammalia</taxon>
        <taxon>Eutheria</taxon>
        <taxon>Euarchontoglires</taxon>
        <taxon>Primates</taxon>
        <taxon>Haplorrhini</taxon>
        <taxon>Catarrhini</taxon>
        <taxon>Cercopithecidae</taxon>
        <taxon>Cercopithecinae</taxon>
        <taxon>Macaca</taxon>
    </lineage>
</organism>
<name>DMAC2_MACFA</name>
<dbReference type="EMBL" id="AB169584">
    <property type="protein sequence ID" value="BAE01666.1"/>
    <property type="molecule type" value="mRNA"/>
</dbReference>
<dbReference type="SMR" id="Q4R5F9"/>
<dbReference type="STRING" id="9541.ENSMFAP00000005661"/>
<dbReference type="eggNOG" id="KOG3864">
    <property type="taxonomic scope" value="Eukaryota"/>
</dbReference>
<dbReference type="Proteomes" id="UP000233100">
    <property type="component" value="Unplaced"/>
</dbReference>
<dbReference type="GO" id="GO:0005739">
    <property type="term" value="C:mitochondrion"/>
    <property type="evidence" value="ECO:0007669"/>
    <property type="project" value="UniProtKB-SubCell"/>
</dbReference>
<dbReference type="GO" id="GO:0032981">
    <property type="term" value="P:mitochondrial respiratory chain complex I assembly"/>
    <property type="evidence" value="ECO:0000250"/>
    <property type="project" value="UniProtKB"/>
</dbReference>
<dbReference type="FunFam" id="3.80.10.10:FF:000168">
    <property type="entry name" value="Distal membrane arm assembly complex 2"/>
    <property type="match status" value="1"/>
</dbReference>
<dbReference type="Gene3D" id="3.80.10.10">
    <property type="entry name" value="Ribonuclease Inhibitor"/>
    <property type="match status" value="1"/>
</dbReference>
<dbReference type="InterPro" id="IPR032675">
    <property type="entry name" value="LRR_dom_sf"/>
</dbReference>
<dbReference type="SUPFAM" id="SSF52047">
    <property type="entry name" value="RNI-like"/>
    <property type="match status" value="1"/>
</dbReference>
<keyword id="KW-0496">Mitochondrion</keyword>
<keyword id="KW-0597">Phosphoprotein</keyword>
<keyword id="KW-1185">Reference proteome</keyword>
<proteinExistence type="evidence at transcript level"/>
<evidence type="ECO:0000250" key="1">
    <source>
        <dbReference type="UniProtKB" id="Q9D7K5"/>
    </source>
</evidence>
<evidence type="ECO:0000250" key="2">
    <source>
        <dbReference type="UniProtKB" id="Q9NW81"/>
    </source>
</evidence>
<evidence type="ECO:0000303" key="3">
    <source ref="1"/>
</evidence>
<evidence type="ECO:0000305" key="4"/>
<gene>
    <name evidence="2" type="primary">DMAC2</name>
    <name evidence="2" type="synonym">ATP5SL</name>
    <name evidence="3" type="ORF">QnpA-12780</name>
</gene>
<reference key="1">
    <citation type="submission" date="2005-06" db="EMBL/GenBank/DDBJ databases">
        <title>DNA sequences of macaque genes expressed in brain or testis and its evolutionary implications.</title>
        <authorList>
            <consortium name="International consortium for macaque cDNA sequencing and analysis"/>
        </authorList>
    </citation>
    <scope>NUCLEOTIDE SEQUENCE [LARGE SCALE MRNA]</scope>
    <source>
        <tissue>Parietal cortex</tissue>
    </source>
</reference>
<comment type="function">
    <text evidence="2">Required for the assembly of the mitochondrial NADH:ubiquinone oxidoreductase complex (complex I). Involved in the assembly of the distal region of complex I.</text>
</comment>
<comment type="subunit">
    <text evidence="2">Interacts with incompletely assembled mitochondrial NADH:ubiquinone oxidoreductase complex (complex I).</text>
</comment>
<comment type="subcellular location">
    <subcellularLocation>
        <location evidence="1">Mitochondrion</location>
    </subcellularLocation>
</comment>
<comment type="similarity">
    <text evidence="4">Belongs to the ATP synthase subunit s family.</text>
</comment>
<feature type="chain" id="PRO_0000318696" description="Distal membrane-arm assembly complex protein 2">
    <location>
        <begin position="1"/>
        <end position="256"/>
    </location>
</feature>
<feature type="modified residue" description="Phosphoserine" evidence="2">
    <location>
        <position position="252"/>
    </location>
</feature>
<protein>
    <recommendedName>
        <fullName evidence="2">Distal membrane-arm assembly complex protein 2</fullName>
    </recommendedName>
    <alternativeName>
        <fullName evidence="2">ATP synthase subunit s-like protein</fullName>
    </alternativeName>
</protein>
<accession>Q4R5F9</accession>